<sequence length="127" mass="14126">MAFKYWFVFAAVLYARQWLSTKCEVPQMTSSSAPDLEEEDDYTAYAPLTCYFTNSTLGLLAPPNCSVLCNSTTTWFNETSPNNASCLLTVDFLTQDAILQENQPYNCSVGHCDNGTCAGPPRHAQCW</sequence>
<comment type="function">
    <text evidence="3 4 5 6">Salivary chemokine-binding protein which has chemokine-neutralizing activity and binds to host chemokines CCL1, CCL3, CCL5, CCL7, CCL8, CCL11, CCL14, CCL15, CCL16, CCL17, CCL18, CCL19, CCL21, CCL22, CCL23, CCL24, CCL25 and CCL26 with nanomolar affinity (PubMed:18678732, PubMed:23910450, PubMed:25266725). Binds to CCL3 and CCL5 with 1:1 stoichiometry (PubMed:23910450). Although binding to CCL25 is observed, does not inhibit CCL25-induced chemotaxis (PubMed:25266725). Has been shown to reduce cardiac injury and inflammation in mice through its anti-CCL5 activity (PubMed:23925450).</text>
</comment>
<comment type="subunit">
    <text evidence="3 7">Monomer.</text>
</comment>
<comment type="subcellular location">
    <subcellularLocation>
        <location evidence="11">Secreted</location>
    </subcellularLocation>
</comment>
<comment type="domain">
    <text evidence="13">N-terminus residues are involved in complex formation with CCL5. A N-terminal derivative peptide composed of residues 37-54 inhibits CCL5 activity in monocyte migration assays, suggesting that Evasin-4 derivatives could be used as a starting point for the development of anti-inflammatory drugs.</text>
</comment>
<comment type="similarity">
    <text evidence="11">Belongs to the evasin C8 family.</text>
</comment>
<comment type="online information" name="Protein Spotlight">
    <link uri="https://www.proteinspotlight.org/back_issues/099"/>
    <text>Hidden powers - Issue 99 of November 2008</text>
</comment>
<evidence type="ECO:0000250" key="1">
    <source>
        <dbReference type="UniProtKB" id="P0C8E8"/>
    </source>
</evidence>
<evidence type="ECO:0000255" key="2"/>
<evidence type="ECO:0000269" key="3">
    <source>
    </source>
</evidence>
<evidence type="ECO:0000269" key="4">
    <source>
    </source>
</evidence>
<evidence type="ECO:0000269" key="5">
    <source>
    </source>
</evidence>
<evidence type="ECO:0000269" key="6">
    <source>
    </source>
</evidence>
<evidence type="ECO:0000269" key="7">
    <source>
    </source>
</evidence>
<evidence type="ECO:0000303" key="8">
    <source>
    </source>
</evidence>
<evidence type="ECO:0000303" key="9">
    <source>
    </source>
</evidence>
<evidence type="ECO:0000303" key="10">
    <source>
    </source>
</evidence>
<evidence type="ECO:0000305" key="11"/>
<evidence type="ECO:0000305" key="12">
    <source>
    </source>
</evidence>
<evidence type="ECO:0000305" key="13">
    <source>
    </source>
</evidence>
<evidence type="ECO:0007744" key="14">
    <source>
        <dbReference type="PDB" id="6ST4"/>
    </source>
</evidence>
<evidence type="ECO:0007744" key="15">
    <source>
        <dbReference type="PDB" id="6STC"/>
    </source>
</evidence>
<evidence type="ECO:0007744" key="16">
    <source>
        <dbReference type="PDB" id="6STE"/>
    </source>
</evidence>
<evidence type="ECO:0007829" key="17">
    <source>
        <dbReference type="PDB" id="6ST4"/>
    </source>
</evidence>
<evidence type="ECO:0007829" key="18">
    <source>
        <dbReference type="PDB" id="6STC"/>
    </source>
</evidence>
<evidence type="ECO:0007829" key="19">
    <source>
        <dbReference type="PDB" id="6STE"/>
    </source>
</evidence>
<organism>
    <name type="scientific">Rhipicephalus sanguineus</name>
    <name type="common">Brown dog tick</name>
    <name type="synonym">Ixodes sanguineus</name>
    <dbReference type="NCBI Taxonomy" id="34632"/>
    <lineage>
        <taxon>Eukaryota</taxon>
        <taxon>Metazoa</taxon>
        <taxon>Ecdysozoa</taxon>
        <taxon>Arthropoda</taxon>
        <taxon>Chelicerata</taxon>
        <taxon>Arachnida</taxon>
        <taxon>Acari</taxon>
        <taxon>Parasitiformes</taxon>
        <taxon>Ixodida</taxon>
        <taxon>Ixodoidea</taxon>
        <taxon>Ixodidae</taxon>
        <taxon>Rhipicephalinae</taxon>
        <taxon>Rhipicephalus</taxon>
        <taxon>Rhipicephalus</taxon>
    </lineage>
</organism>
<feature type="signal peptide" evidence="2">
    <location>
        <begin position="1"/>
        <end position="23"/>
    </location>
</feature>
<feature type="chain" id="PRO_0000354059" description="Evasin-4" evidence="12">
    <location>
        <begin position="24"/>
        <end position="127"/>
    </location>
</feature>
<feature type="glycosylation site" description="N-linked (GlcNAc...) asparagine" evidence="2">
    <location>
        <position position="54"/>
    </location>
</feature>
<feature type="glycosylation site" description="N-linked (GlcNAc...) asparagine" evidence="2">
    <location>
        <position position="64"/>
    </location>
</feature>
<feature type="glycosylation site" description="N-linked (GlcNAc...) asparagine" evidence="2">
    <location>
        <position position="70"/>
    </location>
</feature>
<feature type="glycosylation site" description="N-linked (GlcNAc...) asparagine" evidence="2">
    <location>
        <position position="77"/>
    </location>
</feature>
<feature type="glycosylation site" description="N-linked (GlcNAc...) asparagine" evidence="2">
    <location>
        <position position="83"/>
    </location>
</feature>
<feature type="glycosylation site" description="N-linked (GlcNAc...) asparagine" evidence="2">
    <location>
        <position position="106"/>
    </location>
</feature>
<feature type="glycosylation site" description="N-linked (GlcNAc...) asparagine" evidence="2">
    <location>
        <position position="114"/>
    </location>
</feature>
<feature type="disulfide bond" evidence="7 14 15 16">
    <location>
        <begin position="50"/>
        <end position="69"/>
    </location>
</feature>
<feature type="disulfide bond" evidence="7 14 15 16">
    <location>
        <begin position="65"/>
        <end position="112"/>
    </location>
</feature>
<feature type="disulfide bond" evidence="7 14 15 16">
    <location>
        <begin position="86"/>
        <end position="117"/>
    </location>
</feature>
<feature type="disulfide bond" evidence="7 14 15 16">
    <location>
        <begin position="107"/>
        <end position="126"/>
    </location>
</feature>
<feature type="mutagenesis site" description="Significantly reduced binding to CCL5 and slight reduction in inhibition of chemokine activity." evidence="6">
    <original>E</original>
    <variation>A</variation>
    <location>
        <position position="39"/>
    </location>
</feature>
<feature type="mutagenesis site" description="No effect on binding to CCL5." evidence="6">
    <original>D</original>
    <variation>A</variation>
    <location>
        <position position="40"/>
    </location>
</feature>
<feature type="mutagenesis site" description="Significantly reduced binding to CCL5 and slight reduction in inhibition of chemokine activity." evidence="6">
    <original>Y</original>
    <variation>A</variation>
    <location>
        <position position="42"/>
    </location>
</feature>
<feature type="mutagenesis site" description="No effect on binding to CCL5." evidence="6">
    <original>T</original>
    <variation>A</variation>
    <location>
        <position position="43"/>
    </location>
</feature>
<feature type="mutagenesis site" description="No effect on binding to CCL5." evidence="6">
    <original>T</original>
    <variation>A</variation>
    <location>
        <position position="49"/>
    </location>
</feature>
<feature type="mutagenesis site" description="No effect on binding to CCL5." evidence="6">
    <original>Y</original>
    <variation>A</variation>
    <location>
        <position position="51"/>
    </location>
</feature>
<feature type="mutagenesis site" description="No effect on binding to CCL5." evidence="6">
    <original>F</original>
    <variation>A</variation>
    <location>
        <position position="52"/>
    </location>
</feature>
<feature type="mutagenesis site" description="No effect on binding to CCL5." evidence="6">
    <original>N</original>
    <variation>A</variation>
    <location>
        <position position="54"/>
    </location>
</feature>
<feature type="mutagenesis site" description="No effect on binding to CCL5." evidence="6">
    <original>N</original>
    <variation>A</variation>
    <location>
        <position position="70"/>
    </location>
</feature>
<feature type="mutagenesis site" description="Slightly reduced binding to CCL5." evidence="6">
    <original>T</original>
    <variation>A</variation>
    <location>
        <position position="74"/>
    </location>
</feature>
<feature type="mutagenesis site" description="No effect on binding to CCL5." evidence="6">
    <original>F</original>
    <variation>A</variation>
    <location>
        <position position="76"/>
    </location>
</feature>
<feature type="mutagenesis site" description="No effect on binding to CCL5." evidence="6">
    <original>Q</original>
    <variation>A</variation>
    <location>
        <position position="95"/>
    </location>
</feature>
<feature type="mutagenesis site" description="Slightly reduced binding to CCL5." evidence="6">
    <original>Q</original>
    <variation>A</variation>
    <location>
        <position position="100"/>
    </location>
</feature>
<feature type="mutagenesis site" description="No effect on binding to CCL5." evidence="6">
    <original>W</original>
    <variation>A</variation>
    <location>
        <position position="127"/>
    </location>
</feature>
<feature type="strand" evidence="19">
    <location>
        <begin position="46"/>
        <end position="53"/>
    </location>
</feature>
<feature type="strand" evidence="17">
    <location>
        <begin position="65"/>
        <end position="70"/>
    </location>
</feature>
<feature type="strand" evidence="17">
    <location>
        <begin position="75"/>
        <end position="79"/>
    </location>
</feature>
<feature type="strand" evidence="17">
    <location>
        <begin position="85"/>
        <end position="90"/>
    </location>
</feature>
<feature type="helix" evidence="17">
    <location>
        <begin position="94"/>
        <end position="98"/>
    </location>
</feature>
<feature type="turn" evidence="18">
    <location>
        <begin position="100"/>
        <end position="102"/>
    </location>
</feature>
<feature type="strand" evidence="17">
    <location>
        <begin position="105"/>
        <end position="113"/>
    </location>
</feature>
<feature type="strand" evidence="17">
    <location>
        <begin position="116"/>
        <end position="126"/>
    </location>
</feature>
<accession>P0C8E9</accession>
<proteinExistence type="evidence at protein level"/>
<dbReference type="PDB" id="6ST4">
    <property type="method" value="X-ray"/>
    <property type="resolution" value="1.29 A"/>
    <property type="chains" value="A=24-127"/>
</dbReference>
<dbReference type="PDB" id="6STC">
    <property type="method" value="X-ray"/>
    <property type="resolution" value="1.69 A"/>
    <property type="chains" value="A=24-127"/>
</dbReference>
<dbReference type="PDB" id="6STE">
    <property type="method" value="X-ray"/>
    <property type="resolution" value="1.79 A"/>
    <property type="chains" value="A/B/C/D=24-127"/>
</dbReference>
<dbReference type="PDBsum" id="6ST4"/>
<dbReference type="PDBsum" id="6STC"/>
<dbReference type="PDBsum" id="6STE"/>
<dbReference type="SMR" id="P0C8E9"/>
<dbReference type="VEuPathDB" id="VectorBase:RSAN_047325"/>
<dbReference type="GO" id="GO:0005576">
    <property type="term" value="C:extracellular region"/>
    <property type="evidence" value="ECO:0007669"/>
    <property type="project" value="UniProtKB-SubCell"/>
</dbReference>
<dbReference type="GO" id="GO:0019957">
    <property type="term" value="F:C-C chemokine binding"/>
    <property type="evidence" value="ECO:0000314"/>
    <property type="project" value="UniProtKB"/>
</dbReference>
<dbReference type="GO" id="GO:1900137">
    <property type="term" value="P:negative regulation of chemokine activity"/>
    <property type="evidence" value="ECO:0000314"/>
    <property type="project" value="UniProtKB"/>
</dbReference>
<dbReference type="Gene3D" id="2.30.130.100">
    <property type="match status" value="1"/>
</dbReference>
<dbReference type="InterPro" id="IPR045797">
    <property type="entry name" value="EVA_Class_A"/>
</dbReference>
<dbReference type="InterPro" id="IPR007110">
    <property type="entry name" value="Ig-like_dom"/>
</dbReference>
<dbReference type="Pfam" id="PF19429">
    <property type="entry name" value="EVA_Class_A"/>
    <property type="match status" value="1"/>
</dbReference>
<name>EVA4_RHISA</name>
<reference key="1">
    <citation type="journal article" date="2008" name="J. Exp. Med.">
        <title>Ticks produce highly selective chemokine binding proteins with antiinflammatory activity.</title>
        <authorList>
            <person name="Deruaz M."/>
            <person name="Frauenschuh A."/>
            <person name="Alessandri A.L."/>
            <person name="Dias J.M."/>
            <person name="Coelho F.M."/>
            <person name="Russo R.C."/>
            <person name="Ferreira B.R."/>
            <person name="Graham G.J."/>
            <person name="Shaw J.P."/>
            <person name="Wells T.N.C."/>
            <person name="Teixeira M.M."/>
            <person name="Power C.A."/>
            <person name="Proudfoot A.E.I."/>
        </authorList>
    </citation>
    <scope>NUCLEOTIDE SEQUENCE [MRNA]</scope>
    <scope>SUBUNIT</scope>
    <scope>FUNCTION</scope>
    <source>
        <tissue>Salivary gland</tissue>
    </source>
</reference>
<reference key="2">
    <citation type="journal article" date="2013" name="FEBS J.">
        <title>Evasin-4, a tick-derived chemokine-binding protein with broad selectivity can be modified for use in preclinical disease models.</title>
        <authorList>
            <person name="Deruaz M."/>
            <person name="Bonvin P."/>
            <person name="Severin I.C."/>
            <person name="Johnson Z."/>
            <person name="Krohn S."/>
            <person name="Power C.A."/>
            <person name="Proudfoot A.E."/>
        </authorList>
    </citation>
    <scope>FUNCTION</scope>
</reference>
<reference key="3">
    <citation type="journal article" date="2013" name="Thromb. Haemost.">
        <title>Treatment with the CC chemokine-binding protein Evasin-4 improves post-infarction myocardial injury and survival in mice.</title>
        <authorList>
            <person name="Braunersreuther V."/>
            <person name="Montecucco F."/>
            <person name="Pelli G."/>
            <person name="Galan K."/>
            <person name="Proudfoot A.E."/>
            <person name="Belin A."/>
            <person name="Vuilleumier N."/>
            <person name="Burger F."/>
            <person name="Lenglet S."/>
            <person name="Caffa I."/>
            <person name="Soncini D."/>
            <person name="Nencioni A."/>
            <person name="Vallee J.P."/>
            <person name="Mach F."/>
        </authorList>
    </citation>
    <scope>FUNCTION</scope>
</reference>
<reference key="4">
    <citation type="journal article" date="2014" name="J. Biol. Chem.">
        <title>Identification of the pharmacophore of the CC chemokine-binding proteins Evasin-1 and -4 using phage display.</title>
        <authorList>
            <person name="Bonvin P."/>
            <person name="Dunn S.M."/>
            <person name="Rousseau F."/>
            <person name="Dyer D.P."/>
            <person name="Shaw J."/>
            <person name="Power C.A."/>
            <person name="Handel T.M."/>
            <person name="Proudfoot A.E."/>
        </authorList>
    </citation>
    <scope>FUNCTION</scope>
    <scope>MUTAGENESIS OF GLU-39; ASP-40; TYR-42; THR-43; THR-49; TYR-51; PHE-52; ASN-54; ASN-70; THR-74; PHE-76; GLN-95; GLN-100 AND TRP-127</scope>
</reference>
<reference key="5">
    <citation type="journal article" date="2020" name="J. Biol. Chem.">
        <title>Structural characterization of anti-CCL5 activity of the tick salivary protein evasin-4.</title>
        <authorList>
            <person name="Denisov S.S."/>
            <person name="Ramirez-Escudero M."/>
            <person name="Heinzmann A.C.A."/>
            <person name="Ippel J.H."/>
            <person name="Dawson P.E."/>
            <person name="Koenen R.R."/>
            <person name="Hackeng T.M."/>
            <person name="Janssen B.J.C."/>
            <person name="Dijkgraaf I."/>
        </authorList>
    </citation>
    <scope>X-RAY CRYSTALLOGRAPHY (1.29 ANGSTROMS) OF 24-127</scope>
    <scope>DISULFIDE BONDS</scope>
    <scope>SUBUNIT</scope>
    <scope>NMR SPECTROSCOPY</scope>
    <scope>RECOMBINANT EXPRESSION</scope>
</reference>
<keyword id="KW-0002">3D-structure</keyword>
<keyword id="KW-1015">Disulfide bond</keyword>
<keyword id="KW-0325">Glycoprotein</keyword>
<keyword id="KW-0964">Secreted</keyword>
<keyword id="KW-0732">Signal</keyword>
<protein>
    <recommendedName>
        <fullName evidence="8 9 10">Evasin-4</fullName>
        <shortName evidence="1 11">EVA4</shortName>
    </recommendedName>
</protein>